<keyword id="KW-0028">Amino-acid biosynthesis</keyword>
<keyword id="KW-0067">ATP-binding</keyword>
<keyword id="KW-0963">Cytoplasm</keyword>
<keyword id="KW-0328">Glycosyltransferase</keyword>
<keyword id="KW-0368">Histidine biosynthesis</keyword>
<keyword id="KW-0460">Magnesium</keyword>
<keyword id="KW-0479">Metal-binding</keyword>
<keyword id="KW-0547">Nucleotide-binding</keyword>
<keyword id="KW-1185">Reference proteome</keyword>
<keyword id="KW-0808">Transferase</keyword>
<proteinExistence type="inferred from homology"/>
<name>HIS1_CORK4</name>
<feature type="chain" id="PRO_1000202527" description="ATP phosphoribosyltransferase">
    <location>
        <begin position="1"/>
        <end position="284"/>
    </location>
</feature>
<evidence type="ECO:0000255" key="1">
    <source>
        <dbReference type="HAMAP-Rule" id="MF_00079"/>
    </source>
</evidence>
<gene>
    <name evidence="1" type="primary">hisG</name>
    <name type="ordered locus">ckrop_0916</name>
</gene>
<accession>C4LIL5</accession>
<protein>
    <recommendedName>
        <fullName evidence="1">ATP phosphoribosyltransferase</fullName>
        <shortName evidence="1">ATP-PRT</shortName>
        <shortName evidence="1">ATP-PRTase</shortName>
        <ecNumber evidence="1">2.4.2.17</ecNumber>
    </recommendedName>
</protein>
<organism>
    <name type="scientific">Corynebacterium kroppenstedtii (strain DSM 44385 / JCM 11950 / CIP 105744 / CCUG 35717)</name>
    <dbReference type="NCBI Taxonomy" id="645127"/>
    <lineage>
        <taxon>Bacteria</taxon>
        <taxon>Bacillati</taxon>
        <taxon>Actinomycetota</taxon>
        <taxon>Actinomycetes</taxon>
        <taxon>Mycobacteriales</taxon>
        <taxon>Corynebacteriaceae</taxon>
        <taxon>Corynebacterium</taxon>
    </lineage>
</organism>
<sequence length="284" mass="31065">MLRVAVPNKGSLSQTATHILEEAGYRMRRDSKDLTSWDEQNDVEFFFLRPKDIAIYVAKGHLDLGITGRDLAADSAANGVDELLALGFGASTFRYAAPENEEWNLNKIEGKRIATSYPHLVSADLAKRGIQADVIRLDGAVEISIRLGVADIIADVVSTGRTLRQQGLSPFGDVICTSEAIIVGRHNQPVTDEHQILLRRIEGILHAKNYLMIDYNCPKSLLAEATKLTPGLSAPTVSPLADDDWVAVRAMAPRKDANQLMDRLSALGAEAILATDIRIARLTR</sequence>
<comment type="function">
    <text evidence="1">Catalyzes the condensation of ATP and 5-phosphoribose 1-diphosphate to form N'-(5'-phosphoribosyl)-ATP (PR-ATP). Has a crucial role in the pathway because the rate of histidine biosynthesis seems to be controlled primarily by regulation of HisG enzymatic activity.</text>
</comment>
<comment type="catalytic activity">
    <reaction evidence="1">
        <text>1-(5-phospho-beta-D-ribosyl)-ATP + diphosphate = 5-phospho-alpha-D-ribose 1-diphosphate + ATP</text>
        <dbReference type="Rhea" id="RHEA:18473"/>
        <dbReference type="ChEBI" id="CHEBI:30616"/>
        <dbReference type="ChEBI" id="CHEBI:33019"/>
        <dbReference type="ChEBI" id="CHEBI:58017"/>
        <dbReference type="ChEBI" id="CHEBI:73183"/>
        <dbReference type="EC" id="2.4.2.17"/>
    </reaction>
</comment>
<comment type="cofactor">
    <cofactor evidence="1">
        <name>Mg(2+)</name>
        <dbReference type="ChEBI" id="CHEBI:18420"/>
    </cofactor>
</comment>
<comment type="activity regulation">
    <text evidence="1">Feedback inhibited by histidine.</text>
</comment>
<comment type="pathway">
    <text evidence="1">Amino-acid biosynthesis; L-histidine biosynthesis; L-histidine from 5-phospho-alpha-D-ribose 1-diphosphate: step 1/9.</text>
</comment>
<comment type="subcellular location">
    <subcellularLocation>
        <location evidence="1">Cytoplasm</location>
    </subcellularLocation>
</comment>
<comment type="similarity">
    <text evidence="1">Belongs to the ATP phosphoribosyltransferase family. Long subfamily.</text>
</comment>
<dbReference type="EC" id="2.4.2.17" evidence="1"/>
<dbReference type="EMBL" id="CP001620">
    <property type="protein sequence ID" value="ACR17670.1"/>
    <property type="molecule type" value="Genomic_DNA"/>
</dbReference>
<dbReference type="RefSeq" id="WP_012731557.1">
    <property type="nucleotide sequence ID" value="NC_012704.1"/>
</dbReference>
<dbReference type="SMR" id="C4LIL5"/>
<dbReference type="STRING" id="645127.ckrop_0916"/>
<dbReference type="KEGG" id="ckp:ckrop_0916"/>
<dbReference type="eggNOG" id="COG0040">
    <property type="taxonomic scope" value="Bacteria"/>
</dbReference>
<dbReference type="HOGENOM" id="CLU_038115_1_1_11"/>
<dbReference type="OrthoDB" id="9801867at2"/>
<dbReference type="UniPathway" id="UPA00031">
    <property type="reaction ID" value="UER00006"/>
</dbReference>
<dbReference type="Proteomes" id="UP000001473">
    <property type="component" value="Chromosome"/>
</dbReference>
<dbReference type="GO" id="GO:0005737">
    <property type="term" value="C:cytoplasm"/>
    <property type="evidence" value="ECO:0007669"/>
    <property type="project" value="UniProtKB-SubCell"/>
</dbReference>
<dbReference type="GO" id="GO:0005524">
    <property type="term" value="F:ATP binding"/>
    <property type="evidence" value="ECO:0007669"/>
    <property type="project" value="UniProtKB-KW"/>
</dbReference>
<dbReference type="GO" id="GO:0003879">
    <property type="term" value="F:ATP phosphoribosyltransferase activity"/>
    <property type="evidence" value="ECO:0007669"/>
    <property type="project" value="UniProtKB-UniRule"/>
</dbReference>
<dbReference type="GO" id="GO:0000287">
    <property type="term" value="F:magnesium ion binding"/>
    <property type="evidence" value="ECO:0007669"/>
    <property type="project" value="UniProtKB-UniRule"/>
</dbReference>
<dbReference type="GO" id="GO:0000105">
    <property type="term" value="P:L-histidine biosynthetic process"/>
    <property type="evidence" value="ECO:0007669"/>
    <property type="project" value="UniProtKB-UniRule"/>
</dbReference>
<dbReference type="CDD" id="cd13591">
    <property type="entry name" value="PBP2_HisGL1"/>
    <property type="match status" value="1"/>
</dbReference>
<dbReference type="FunFam" id="3.30.70.120:FF:000003">
    <property type="entry name" value="ATP phosphoribosyltransferase"/>
    <property type="match status" value="1"/>
</dbReference>
<dbReference type="Gene3D" id="3.30.70.120">
    <property type="match status" value="1"/>
</dbReference>
<dbReference type="Gene3D" id="3.40.190.10">
    <property type="entry name" value="Periplasmic binding protein-like II"/>
    <property type="match status" value="2"/>
</dbReference>
<dbReference type="HAMAP" id="MF_00079">
    <property type="entry name" value="HisG_Long"/>
    <property type="match status" value="1"/>
</dbReference>
<dbReference type="InterPro" id="IPR020621">
    <property type="entry name" value="ATP-PRT_HisG_long"/>
</dbReference>
<dbReference type="InterPro" id="IPR013820">
    <property type="entry name" value="ATP_PRibTrfase_cat"/>
</dbReference>
<dbReference type="InterPro" id="IPR018198">
    <property type="entry name" value="ATP_PRibTrfase_CS"/>
</dbReference>
<dbReference type="InterPro" id="IPR001348">
    <property type="entry name" value="ATP_PRibTrfase_HisG"/>
</dbReference>
<dbReference type="InterPro" id="IPR013115">
    <property type="entry name" value="HisG_C"/>
</dbReference>
<dbReference type="InterPro" id="IPR011322">
    <property type="entry name" value="N-reg_PII-like_a/b"/>
</dbReference>
<dbReference type="InterPro" id="IPR015867">
    <property type="entry name" value="N-reg_PII/ATP_PRibTrfase_C"/>
</dbReference>
<dbReference type="NCBIfam" id="TIGR00070">
    <property type="entry name" value="hisG"/>
    <property type="match status" value="1"/>
</dbReference>
<dbReference type="NCBIfam" id="TIGR03455">
    <property type="entry name" value="HisG_C-term"/>
    <property type="match status" value="1"/>
</dbReference>
<dbReference type="PANTHER" id="PTHR21403:SF8">
    <property type="entry name" value="ATP PHOSPHORIBOSYLTRANSFERASE"/>
    <property type="match status" value="1"/>
</dbReference>
<dbReference type="PANTHER" id="PTHR21403">
    <property type="entry name" value="ATP PHOSPHORIBOSYLTRANSFERASE ATP-PRTASE"/>
    <property type="match status" value="1"/>
</dbReference>
<dbReference type="Pfam" id="PF01634">
    <property type="entry name" value="HisG"/>
    <property type="match status" value="1"/>
</dbReference>
<dbReference type="Pfam" id="PF08029">
    <property type="entry name" value="HisG_C"/>
    <property type="match status" value="1"/>
</dbReference>
<dbReference type="SUPFAM" id="SSF54913">
    <property type="entry name" value="GlnB-like"/>
    <property type="match status" value="1"/>
</dbReference>
<dbReference type="SUPFAM" id="SSF53850">
    <property type="entry name" value="Periplasmic binding protein-like II"/>
    <property type="match status" value="1"/>
</dbReference>
<dbReference type="PROSITE" id="PS01316">
    <property type="entry name" value="ATP_P_PHORIBOSYLTR"/>
    <property type="match status" value="1"/>
</dbReference>
<reference key="1">
    <citation type="journal article" date="2008" name="J. Biotechnol.">
        <title>Ultrafast pyrosequencing of Corynebacterium kroppenstedtii DSM44385 revealed insights into the physiology of a lipophilic corynebacterium that lacks mycolic acids.</title>
        <authorList>
            <person name="Tauch A."/>
            <person name="Schneider J."/>
            <person name="Szczepanowski R."/>
            <person name="Tilker A."/>
            <person name="Viehoever P."/>
            <person name="Gartemann K.-H."/>
            <person name="Arnold W."/>
            <person name="Blom J."/>
            <person name="Brinkrolf K."/>
            <person name="Brune I."/>
            <person name="Goetker S."/>
            <person name="Weisshaar B."/>
            <person name="Goesmann A."/>
            <person name="Droege M."/>
            <person name="Puehler A."/>
        </authorList>
    </citation>
    <scope>NUCLEOTIDE SEQUENCE [LARGE SCALE GENOMIC DNA]</scope>
    <source>
        <strain>DSM 44385 / JCM 11950 / CIP 105744 / CCUG 35717</strain>
    </source>
</reference>